<gene>
    <name type="primary">GDCSP</name>
</gene>
<feature type="transit peptide" description="Mitochondrion" evidence="2">
    <location>
        <begin position="1"/>
        <end position="63"/>
    </location>
</feature>
<feature type="chain" id="PRO_0000010745" description="Glycine dehydrogenase (decarboxylating), mitochondrial">
    <location>
        <begin position="64"/>
        <end position="1034"/>
    </location>
</feature>
<feature type="modified residue" description="N6-(pyridoxal phosphate)lysine" evidence="1">
    <location>
        <position position="770"/>
    </location>
</feature>
<name>GCSP_FLAAN</name>
<protein>
    <recommendedName>
        <fullName>Glycine dehydrogenase (decarboxylating), mitochondrial</fullName>
        <ecNumber>1.4.4.2</ecNumber>
    </recommendedName>
    <alternativeName>
        <fullName>Glycine cleavage system P protein</fullName>
    </alternativeName>
    <alternativeName>
        <fullName>Glycine decarboxylase</fullName>
    </alternativeName>
    <alternativeName>
        <fullName>Glycine dehydrogenase (aminomethyl-transferring)</fullName>
    </alternativeName>
</protein>
<reference key="1">
    <citation type="online journal article" date="1998" name="Plant Gene Register">
        <title>The GDCSP gene encoding P-protein of the glycine cleavage system in the C3-C4 intermediate plant Flaveria anomala.</title>
        <authorList>
            <person name="Nan Q."/>
            <person name="Bauwe H."/>
        </authorList>
        <locator>PGR98-004</locator>
    </citation>
    <scope>NUCLEOTIDE SEQUENCE [GENOMIC DNA]</scope>
    <source>
        <tissue>Leaf</tissue>
    </source>
</reference>
<accession>O49850</accession>
<comment type="function">
    <text>The glycine cleavage system catalyzes the degradation of glycine. The P protein binds the alpha-amino group of glycine through its pyridoxal phosphate cofactor; CO(2) is released and the remaining methylamine moiety is then transferred to the lipoamide cofactor of the H protein.</text>
</comment>
<comment type="catalytic activity">
    <reaction>
        <text>N(6)-[(R)-lipoyl]-L-lysyl-[glycine-cleavage complex H protein] + glycine + H(+) = N(6)-[(R)-S(8)-aminomethyldihydrolipoyl]-L-lysyl-[glycine-cleavage complex H protein] + CO2</text>
        <dbReference type="Rhea" id="RHEA:24304"/>
        <dbReference type="Rhea" id="RHEA-COMP:10494"/>
        <dbReference type="Rhea" id="RHEA-COMP:10495"/>
        <dbReference type="ChEBI" id="CHEBI:15378"/>
        <dbReference type="ChEBI" id="CHEBI:16526"/>
        <dbReference type="ChEBI" id="CHEBI:57305"/>
        <dbReference type="ChEBI" id="CHEBI:83099"/>
        <dbReference type="ChEBI" id="CHEBI:83143"/>
        <dbReference type="EC" id="1.4.4.2"/>
    </reaction>
</comment>
<comment type="cofactor">
    <cofactor>
        <name>pyridoxal 5'-phosphate</name>
        <dbReference type="ChEBI" id="CHEBI:597326"/>
    </cofactor>
</comment>
<comment type="subunit">
    <text evidence="1">Homodimer (By similarity). The glycine cleavage system is composed of four proteins: P, T, L and H.</text>
</comment>
<comment type="subcellular location">
    <subcellularLocation>
        <location>Mitochondrion</location>
    </subcellularLocation>
</comment>
<comment type="similarity">
    <text evidence="3">Belongs to the GcvP family.</text>
</comment>
<evidence type="ECO:0000250" key="1"/>
<evidence type="ECO:0000255" key="2"/>
<evidence type="ECO:0000305" key="3"/>
<sequence length="1034" mass="112695">MERARRLAMLGRLVSQTKHNPSISSPALCSPSRYVSSLSPYVCGGTNVRSDRNLNGFGSQVRTISVEALKPSDTFPRRHNSATPEEQTKMAEFVGFSNLDSLIDATVPKSIRLDSMKYSKFDEGLTESQMIAHMQDLASKNKIFKSFIGMGYYNTSVPTVILRNIMENPGWYTQYTPYQAEIAQGRLESLLNFQTMITDLTGLPMSNASLLDEGTAAAEAMAMCNNIQKGKKKTFIIASNCHPQTIDICKTRADGFDLKVVTSDLKDFDYSSGDVCGVLVQYPGTEGELLDYSEFIKNAHANGVKVVMASDLLALTILKPPGELGADIVVGSAQRFGVPMGYGGPHAAFLATSQEYKRMMPGRIIGVSVDSSGKPALRMAMQTREQHIRRDKATSNICTAQALLANMAAMYGVYHGPEGLKTIAKRVHGLAGTFAAGLKKLGTVQVQDLPFFDTVKVTCADSKAIAEEACKHKMNLRIVDKNTITVAFDETTTIEDVDTLFKVFALGKPVPFTAASIAPEVQDAIPSGLVRETPYLTHPIFNMYHTEHELLRYISKLQSKDLSLCHSMIPLGSCTMKLNATTEMMPVTWPAFADIHPFAPTEQAQGYQEMFKNLGDLLCTITGFDSFSLQPNAGAAGEYAGLMVIRAYHMARGDHHRNVCIIPVSAHGTNPASAAMCGMKIITVGTDSKGNINIEELRKAAEANKENLSALMVTYPSTHGVYEEGIDEICKIIHDNGGQVYMDGANMNAQVGLTSPGWIGADVCHLNLHKTFCIPHGGGGPGMGPIGVKKHLAPYLPSHPVVPTGGIPAPEESQPLGTIAAAPWGSALILPISYTYIAMMGSQGITNASKIAILNANYMAKRLENHYPILFRGVNGTVAHEFIVDLRPLKTTAGIEPEDVAKRLIDYGFHGPTMSWPVPGTLMIEPTESESKAELDRFCDALISIRQEIAEIEKGNVDFNNNVIKGAPHPPQLLMADKWTKPYSREYAAYPAPWLRAAKFWPTTCRVDNVYGDRNLICTLQPPQEYEEKAEATA</sequence>
<organism>
    <name type="scientific">Flaveria anomala</name>
    <name type="common">Yellowtops</name>
    <dbReference type="NCBI Taxonomy" id="35877"/>
    <lineage>
        <taxon>Eukaryota</taxon>
        <taxon>Viridiplantae</taxon>
        <taxon>Streptophyta</taxon>
        <taxon>Embryophyta</taxon>
        <taxon>Tracheophyta</taxon>
        <taxon>Spermatophyta</taxon>
        <taxon>Magnoliopsida</taxon>
        <taxon>eudicotyledons</taxon>
        <taxon>Gunneridae</taxon>
        <taxon>Pentapetalae</taxon>
        <taxon>asterids</taxon>
        <taxon>campanulids</taxon>
        <taxon>Asterales</taxon>
        <taxon>Asteraceae</taxon>
        <taxon>Asteroideae</taxon>
        <taxon>Heliantheae alliance</taxon>
        <taxon>Tageteae</taxon>
        <taxon>Flaveria</taxon>
    </lineage>
</organism>
<keyword id="KW-0496">Mitochondrion</keyword>
<keyword id="KW-0560">Oxidoreductase</keyword>
<keyword id="KW-0663">Pyridoxal phosphate</keyword>
<keyword id="KW-0809">Transit peptide</keyword>
<dbReference type="EC" id="1.4.4.2"/>
<dbReference type="EMBL" id="Z99762">
    <property type="protein sequence ID" value="CAB16911.1"/>
    <property type="molecule type" value="Genomic_DNA"/>
</dbReference>
<dbReference type="SMR" id="O49850"/>
<dbReference type="GO" id="GO:0048046">
    <property type="term" value="C:apoplast"/>
    <property type="evidence" value="ECO:0007669"/>
    <property type="project" value="TreeGrafter"/>
</dbReference>
<dbReference type="GO" id="GO:0009941">
    <property type="term" value="C:chloroplast envelope"/>
    <property type="evidence" value="ECO:0007669"/>
    <property type="project" value="TreeGrafter"/>
</dbReference>
<dbReference type="GO" id="GO:0005960">
    <property type="term" value="C:glycine cleavage complex"/>
    <property type="evidence" value="ECO:0007669"/>
    <property type="project" value="TreeGrafter"/>
</dbReference>
<dbReference type="GO" id="GO:0005739">
    <property type="term" value="C:mitochondrion"/>
    <property type="evidence" value="ECO:0007669"/>
    <property type="project" value="UniProtKB-SubCell"/>
</dbReference>
<dbReference type="GO" id="GO:0016594">
    <property type="term" value="F:glycine binding"/>
    <property type="evidence" value="ECO:0007669"/>
    <property type="project" value="TreeGrafter"/>
</dbReference>
<dbReference type="GO" id="GO:0004375">
    <property type="term" value="F:glycine dehydrogenase (decarboxylating) activity"/>
    <property type="evidence" value="ECO:0007669"/>
    <property type="project" value="UniProtKB-EC"/>
</dbReference>
<dbReference type="GO" id="GO:0030170">
    <property type="term" value="F:pyridoxal phosphate binding"/>
    <property type="evidence" value="ECO:0007669"/>
    <property type="project" value="TreeGrafter"/>
</dbReference>
<dbReference type="GO" id="GO:0019464">
    <property type="term" value="P:glycine decarboxylation via glycine cleavage system"/>
    <property type="evidence" value="ECO:0007669"/>
    <property type="project" value="TreeGrafter"/>
</dbReference>
<dbReference type="CDD" id="cd00613">
    <property type="entry name" value="GDC-P"/>
    <property type="match status" value="2"/>
</dbReference>
<dbReference type="FunFam" id="3.90.1150.10:FF:000025">
    <property type="entry name" value="Glycine cleavage system P protein"/>
    <property type="match status" value="1"/>
</dbReference>
<dbReference type="FunFam" id="3.40.640.10:FF:000005">
    <property type="entry name" value="Glycine dehydrogenase (decarboxylating), mitochondrial"/>
    <property type="match status" value="1"/>
</dbReference>
<dbReference type="FunFam" id="3.90.1150.10:FF:000007">
    <property type="entry name" value="Glycine dehydrogenase (decarboxylating), mitochondrial"/>
    <property type="match status" value="1"/>
</dbReference>
<dbReference type="FunFam" id="3.40.640.10:FF:000007">
    <property type="entry name" value="glycine dehydrogenase (Decarboxylating), mitochondrial"/>
    <property type="match status" value="1"/>
</dbReference>
<dbReference type="Gene3D" id="3.90.1150.10">
    <property type="entry name" value="Aspartate Aminotransferase, domain 1"/>
    <property type="match status" value="2"/>
</dbReference>
<dbReference type="Gene3D" id="3.40.640.10">
    <property type="entry name" value="Type I PLP-dependent aspartate aminotransferase-like (Major domain)"/>
    <property type="match status" value="2"/>
</dbReference>
<dbReference type="HAMAP" id="MF_00711">
    <property type="entry name" value="GcvP"/>
    <property type="match status" value="1"/>
</dbReference>
<dbReference type="InterPro" id="IPR003437">
    <property type="entry name" value="GcvP"/>
</dbReference>
<dbReference type="InterPro" id="IPR049316">
    <property type="entry name" value="GDC-P_C"/>
</dbReference>
<dbReference type="InterPro" id="IPR049315">
    <property type="entry name" value="GDC-P_N"/>
</dbReference>
<dbReference type="InterPro" id="IPR020581">
    <property type="entry name" value="GDC_P"/>
</dbReference>
<dbReference type="InterPro" id="IPR015424">
    <property type="entry name" value="PyrdxlP-dep_Trfase"/>
</dbReference>
<dbReference type="InterPro" id="IPR015421">
    <property type="entry name" value="PyrdxlP-dep_Trfase_major"/>
</dbReference>
<dbReference type="InterPro" id="IPR015422">
    <property type="entry name" value="PyrdxlP-dep_Trfase_small"/>
</dbReference>
<dbReference type="NCBIfam" id="TIGR00461">
    <property type="entry name" value="gcvP"/>
    <property type="match status" value="1"/>
</dbReference>
<dbReference type="NCBIfam" id="NF003346">
    <property type="entry name" value="PRK04366.1"/>
    <property type="match status" value="1"/>
</dbReference>
<dbReference type="PANTHER" id="PTHR11773:SF12">
    <property type="entry name" value="GLYCINE CLEAVAGE SYSTEM P PROTEIN"/>
    <property type="match status" value="1"/>
</dbReference>
<dbReference type="PANTHER" id="PTHR11773">
    <property type="entry name" value="GLYCINE DEHYDROGENASE, DECARBOXYLATING"/>
    <property type="match status" value="1"/>
</dbReference>
<dbReference type="Pfam" id="PF21478">
    <property type="entry name" value="GcvP2_C"/>
    <property type="match status" value="1"/>
</dbReference>
<dbReference type="Pfam" id="PF02347">
    <property type="entry name" value="GDC-P"/>
    <property type="match status" value="2"/>
</dbReference>
<dbReference type="SUPFAM" id="SSF53383">
    <property type="entry name" value="PLP-dependent transferases"/>
    <property type="match status" value="2"/>
</dbReference>
<proteinExistence type="inferred from homology"/>